<feature type="signal peptide" evidence="4">
    <location>
        <begin position="1"/>
        <end position="23"/>
    </location>
</feature>
<feature type="chain" id="PRO_0000278240" description="E3 ubiquitin-protein ligase RNF43">
    <location>
        <begin position="24"/>
        <end position="784"/>
    </location>
</feature>
<feature type="topological domain" description="Extracellular" evidence="4">
    <location>
        <begin position="24"/>
        <end position="197"/>
    </location>
</feature>
<feature type="transmembrane region" description="Helical" evidence="4">
    <location>
        <begin position="198"/>
        <end position="218"/>
    </location>
</feature>
<feature type="topological domain" description="Cytoplasmic" evidence="4">
    <location>
        <begin position="219"/>
        <end position="784"/>
    </location>
</feature>
<feature type="zinc finger region" description="RING-type; atypical" evidence="5">
    <location>
        <begin position="272"/>
        <end position="313"/>
    </location>
</feature>
<feature type="region of interest" description="Disordered" evidence="6">
    <location>
        <begin position="364"/>
        <end position="407"/>
    </location>
</feature>
<feature type="region of interest" description="Disordered" evidence="6">
    <location>
        <begin position="459"/>
        <end position="478"/>
    </location>
</feature>
<feature type="region of interest" description="Disordered" evidence="6">
    <location>
        <begin position="516"/>
        <end position="671"/>
    </location>
</feature>
<feature type="compositionally biased region" description="Basic residues" evidence="6">
    <location>
        <begin position="386"/>
        <end position="395"/>
    </location>
</feature>
<feature type="compositionally biased region" description="Low complexity" evidence="6">
    <location>
        <begin position="464"/>
        <end position="478"/>
    </location>
</feature>
<feature type="compositionally biased region" description="Basic residues" evidence="6">
    <location>
        <begin position="548"/>
        <end position="568"/>
    </location>
</feature>
<feature type="compositionally biased region" description="Polar residues" evidence="6">
    <location>
        <begin position="583"/>
        <end position="608"/>
    </location>
</feature>
<feature type="compositionally biased region" description="Low complexity" evidence="6">
    <location>
        <begin position="618"/>
        <end position="629"/>
    </location>
</feature>
<feature type="glycosylation site" description="N-linked (GlcNAc...) asparagine" evidence="4">
    <location>
        <position position="62"/>
    </location>
</feature>
<feature type="glycosylation site" description="N-linked (GlcNAc...) asparagine" evidence="4">
    <location>
        <position position="92"/>
    </location>
</feature>
<feature type="disulfide bond" evidence="3">
    <location>
        <begin position="91"/>
        <end position="119"/>
    </location>
</feature>
<feature type="splice variant" id="VSP_023203" description="In isoform 2." evidence="10">
    <location>
        <begin position="1"/>
        <end position="127"/>
    </location>
</feature>
<feature type="splice variant" id="VSP_023204" description="In isoform 3." evidence="10">
    <original>PRRAP</original>
    <variation>QRSTL</variation>
    <location>
        <begin position="112"/>
        <end position="116"/>
    </location>
</feature>
<feature type="splice variant" id="VSP_023205" description="In isoform 3." evidence="10">
    <location>
        <begin position="117"/>
        <end position="784"/>
    </location>
</feature>
<feature type="sequence conflict" description="In Ref. 3; AAH75707." evidence="11" ref="3">
    <original>A</original>
    <variation>S</variation>
    <location>
        <position position="367"/>
    </location>
</feature>
<feature type="sequence conflict" description="In Ref. 3; AAH75707." evidence="11" ref="3">
    <original>P</original>
    <variation>PSP</variation>
    <location>
        <position position="631"/>
    </location>
</feature>
<feature type="sequence conflict" description="In Ref. 3; AAH75707." evidence="11" ref="3">
    <original>G</original>
    <variation>D</variation>
    <location>
        <position position="755"/>
    </location>
</feature>
<organism>
    <name type="scientific">Mus musculus</name>
    <name type="common">Mouse</name>
    <dbReference type="NCBI Taxonomy" id="10090"/>
    <lineage>
        <taxon>Eukaryota</taxon>
        <taxon>Metazoa</taxon>
        <taxon>Chordata</taxon>
        <taxon>Craniata</taxon>
        <taxon>Vertebrata</taxon>
        <taxon>Euteleostomi</taxon>
        <taxon>Mammalia</taxon>
        <taxon>Eutheria</taxon>
        <taxon>Euarchontoglires</taxon>
        <taxon>Glires</taxon>
        <taxon>Rodentia</taxon>
        <taxon>Myomorpha</taxon>
        <taxon>Muroidea</taxon>
        <taxon>Muridae</taxon>
        <taxon>Murinae</taxon>
        <taxon>Mus</taxon>
        <taxon>Mus</taxon>
    </lineage>
</organism>
<accession>Q5NCP0</accession>
<accession>B2KGH3</accession>
<accession>Q6DI76</accession>
<accession>Q8BME0</accession>
<accession>Q8C191</accession>
<accession>Q8K0X4</accession>
<gene>
    <name type="primary">Rnf43</name>
</gene>
<evidence type="ECO:0000250" key="1"/>
<evidence type="ECO:0000250" key="2">
    <source>
        <dbReference type="UniProtKB" id="P0DPR2"/>
    </source>
</evidence>
<evidence type="ECO:0000250" key="3">
    <source>
        <dbReference type="UniProtKB" id="Q68DV7"/>
    </source>
</evidence>
<evidence type="ECO:0000255" key="4"/>
<evidence type="ECO:0000255" key="5">
    <source>
        <dbReference type="PROSITE-ProRule" id="PRU00175"/>
    </source>
</evidence>
<evidence type="ECO:0000256" key="6">
    <source>
        <dbReference type="SAM" id="MobiDB-lite"/>
    </source>
</evidence>
<evidence type="ECO:0000269" key="7">
    <source>
    </source>
</evidence>
<evidence type="ECO:0000269" key="8">
    <source>
    </source>
</evidence>
<evidence type="ECO:0000269" key="9">
    <source>
    </source>
</evidence>
<evidence type="ECO:0000303" key="10">
    <source>
    </source>
</evidence>
<evidence type="ECO:0000305" key="11"/>
<keyword id="KW-0025">Alternative splicing</keyword>
<keyword id="KW-1003">Cell membrane</keyword>
<keyword id="KW-0217">Developmental protein</keyword>
<keyword id="KW-1015">Disulfide bond</keyword>
<keyword id="KW-0256">Endoplasmic reticulum</keyword>
<keyword id="KW-0325">Glycoprotein</keyword>
<keyword id="KW-0472">Membrane</keyword>
<keyword id="KW-0479">Metal-binding</keyword>
<keyword id="KW-0539">Nucleus</keyword>
<keyword id="KW-1185">Reference proteome</keyword>
<keyword id="KW-0732">Signal</keyword>
<keyword id="KW-0808">Transferase</keyword>
<keyword id="KW-0812">Transmembrane</keyword>
<keyword id="KW-1133">Transmembrane helix</keyword>
<keyword id="KW-0832">Ubl conjugation</keyword>
<keyword id="KW-0833">Ubl conjugation pathway</keyword>
<keyword id="KW-0879">Wnt signaling pathway</keyword>
<keyword id="KW-0862">Zinc</keyword>
<keyword id="KW-0863">Zinc-finger</keyword>
<dbReference type="EC" id="2.3.2.27"/>
<dbReference type="EMBL" id="AK028750">
    <property type="protein sequence ID" value="BAC26097.1"/>
    <property type="molecule type" value="mRNA"/>
</dbReference>
<dbReference type="EMBL" id="AK032782">
    <property type="protein sequence ID" value="BAC28018.1"/>
    <property type="molecule type" value="mRNA"/>
</dbReference>
<dbReference type="EMBL" id="AL596086">
    <property type="status" value="NOT_ANNOTATED_CDS"/>
    <property type="molecule type" value="Genomic_DNA"/>
</dbReference>
<dbReference type="EMBL" id="AL604022">
    <property type="status" value="NOT_ANNOTATED_CDS"/>
    <property type="molecule type" value="Genomic_DNA"/>
</dbReference>
<dbReference type="EMBL" id="CU393486">
    <property type="status" value="NOT_ANNOTATED_CDS"/>
    <property type="molecule type" value="Genomic_DNA"/>
</dbReference>
<dbReference type="EMBL" id="BC029717">
    <property type="protein sequence ID" value="AAH29717.1"/>
    <property type="molecule type" value="mRNA"/>
</dbReference>
<dbReference type="EMBL" id="BC075707">
    <property type="protein sequence ID" value="AAH75707.1"/>
    <property type="molecule type" value="mRNA"/>
</dbReference>
<dbReference type="CCDS" id="CCDS25215.2">
    <molecule id="Q5NCP0-1"/>
</dbReference>
<dbReference type="CCDS" id="CCDS88216.1">
    <molecule id="Q5NCP0-2"/>
</dbReference>
<dbReference type="RefSeq" id="NP_001350366.1">
    <molecule id="Q5NCP0-2"/>
    <property type="nucleotide sequence ID" value="NM_001363437.1"/>
</dbReference>
<dbReference type="RefSeq" id="NP_766036.2">
    <molecule id="Q5NCP0-1"/>
    <property type="nucleotide sequence ID" value="NM_172448.4"/>
</dbReference>
<dbReference type="RefSeq" id="XP_006532764.1">
    <property type="nucleotide sequence ID" value="XM_006532701.3"/>
</dbReference>
<dbReference type="RefSeq" id="XP_011247146.1">
    <property type="nucleotide sequence ID" value="XM_011248844.2"/>
</dbReference>
<dbReference type="SMR" id="Q5NCP0"/>
<dbReference type="DIP" id="DIP-59915N"/>
<dbReference type="FunCoup" id="Q5NCP0">
    <property type="interactions" value="1246"/>
</dbReference>
<dbReference type="IntAct" id="Q5NCP0">
    <property type="interactions" value="1"/>
</dbReference>
<dbReference type="STRING" id="10090.ENSMUSP00000130685"/>
<dbReference type="GlyCosmos" id="Q5NCP0">
    <property type="glycosylation" value="2 sites, No reported glycans"/>
</dbReference>
<dbReference type="GlyGen" id="Q5NCP0">
    <property type="glycosylation" value="2 sites"/>
</dbReference>
<dbReference type="iPTMnet" id="Q5NCP0"/>
<dbReference type="PhosphoSitePlus" id="Q5NCP0"/>
<dbReference type="PaxDb" id="10090-ENSMUSP00000130685"/>
<dbReference type="DNASU" id="207742"/>
<dbReference type="Ensembl" id="ENSMUST00000040089.5">
    <molecule id="Q5NCP0-2"/>
    <property type="protein sequence ID" value="ENSMUSP00000044241.5"/>
    <property type="gene ID" value="ENSMUSG00000034177.16"/>
</dbReference>
<dbReference type="Ensembl" id="ENSMUST00000092800.12">
    <molecule id="Q5NCP0-1"/>
    <property type="protein sequence ID" value="ENSMUSP00000090476.6"/>
    <property type="gene ID" value="ENSMUSG00000034177.16"/>
</dbReference>
<dbReference type="Ensembl" id="ENSMUST00000165679.8">
    <molecule id="Q5NCP0-1"/>
    <property type="protein sequence ID" value="ENSMUSP00000130685.2"/>
    <property type="gene ID" value="ENSMUSG00000034177.16"/>
</dbReference>
<dbReference type="GeneID" id="207742"/>
<dbReference type="KEGG" id="mmu:207742"/>
<dbReference type="UCSC" id="uc007kue.2">
    <molecule id="Q5NCP0-1"/>
    <property type="organism name" value="mouse"/>
</dbReference>
<dbReference type="AGR" id="MGI:2442609"/>
<dbReference type="CTD" id="54894"/>
<dbReference type="MGI" id="MGI:2442609">
    <property type="gene designation" value="Rnf43"/>
</dbReference>
<dbReference type="VEuPathDB" id="HostDB:ENSMUSG00000034177"/>
<dbReference type="eggNOG" id="KOG0800">
    <property type="taxonomic scope" value="Eukaryota"/>
</dbReference>
<dbReference type="GeneTree" id="ENSGT00940000154006"/>
<dbReference type="HOGENOM" id="CLU_401501_0_0_1"/>
<dbReference type="InParanoid" id="Q5NCP0"/>
<dbReference type="OMA" id="VRCRPRH"/>
<dbReference type="OrthoDB" id="8062037at2759"/>
<dbReference type="PhylomeDB" id="Q5NCP0"/>
<dbReference type="TreeFam" id="TF317074"/>
<dbReference type="Reactome" id="R-MMU-4641263">
    <property type="pathway name" value="Regulation of FZD by ubiquitination"/>
</dbReference>
<dbReference type="UniPathway" id="UPA00143"/>
<dbReference type="BioGRID-ORCS" id="207742">
    <property type="hits" value="2 hits in 62 CRISPR screens"/>
</dbReference>
<dbReference type="ChiTaRS" id="Rnf43">
    <property type="organism name" value="mouse"/>
</dbReference>
<dbReference type="PRO" id="PR:Q5NCP0"/>
<dbReference type="Proteomes" id="UP000000589">
    <property type="component" value="Chromosome 11"/>
</dbReference>
<dbReference type="RNAct" id="Q5NCP0">
    <property type="molecule type" value="protein"/>
</dbReference>
<dbReference type="Bgee" id="ENSMUSG00000034177">
    <property type="expression patterns" value="Expressed in saccule of membranous labyrinth and 116 other cell types or tissues"/>
</dbReference>
<dbReference type="ExpressionAtlas" id="Q5NCP0">
    <property type="expression patterns" value="baseline and differential"/>
</dbReference>
<dbReference type="GO" id="GO:0005789">
    <property type="term" value="C:endoplasmic reticulum membrane"/>
    <property type="evidence" value="ECO:0007669"/>
    <property type="project" value="UniProtKB-SubCell"/>
</dbReference>
<dbReference type="GO" id="GO:0005635">
    <property type="term" value="C:nuclear envelope"/>
    <property type="evidence" value="ECO:0007669"/>
    <property type="project" value="UniProtKB-SubCell"/>
</dbReference>
<dbReference type="GO" id="GO:0005886">
    <property type="term" value="C:plasma membrane"/>
    <property type="evidence" value="ECO:0000250"/>
    <property type="project" value="UniProtKB"/>
</dbReference>
<dbReference type="GO" id="GO:0005109">
    <property type="term" value="F:frizzled binding"/>
    <property type="evidence" value="ECO:0007669"/>
    <property type="project" value="Ensembl"/>
</dbReference>
<dbReference type="GO" id="GO:0004842">
    <property type="term" value="F:ubiquitin-protein transferase activity"/>
    <property type="evidence" value="ECO:0000250"/>
    <property type="project" value="UniProtKB"/>
</dbReference>
<dbReference type="GO" id="GO:0008270">
    <property type="term" value="F:zinc ion binding"/>
    <property type="evidence" value="ECO:0007669"/>
    <property type="project" value="UniProtKB-KW"/>
</dbReference>
<dbReference type="GO" id="GO:0030178">
    <property type="term" value="P:negative regulation of Wnt signaling pathway"/>
    <property type="evidence" value="ECO:0000315"/>
    <property type="project" value="UniProtKB"/>
</dbReference>
<dbReference type="GO" id="GO:0016567">
    <property type="term" value="P:protein ubiquitination"/>
    <property type="evidence" value="ECO:0000250"/>
    <property type="project" value="UniProtKB"/>
</dbReference>
<dbReference type="GO" id="GO:0072089">
    <property type="term" value="P:stem cell proliferation"/>
    <property type="evidence" value="ECO:0000315"/>
    <property type="project" value="UniProtKB"/>
</dbReference>
<dbReference type="GO" id="GO:0006511">
    <property type="term" value="P:ubiquitin-dependent protein catabolic process"/>
    <property type="evidence" value="ECO:0000250"/>
    <property type="project" value="UniProtKB"/>
</dbReference>
<dbReference type="GO" id="GO:0038018">
    <property type="term" value="P:Wnt receptor catabolic process"/>
    <property type="evidence" value="ECO:0000250"/>
    <property type="project" value="UniProtKB"/>
</dbReference>
<dbReference type="GO" id="GO:0016055">
    <property type="term" value="P:Wnt signaling pathway"/>
    <property type="evidence" value="ECO:0007669"/>
    <property type="project" value="UniProtKB-KW"/>
</dbReference>
<dbReference type="CDD" id="cd16798">
    <property type="entry name" value="RING-H2_RNF43"/>
    <property type="match status" value="1"/>
</dbReference>
<dbReference type="FunFam" id="3.30.40.10:FF:000075">
    <property type="entry name" value="Putative e3 ubiquitin-protein ligase rnf43"/>
    <property type="match status" value="1"/>
</dbReference>
<dbReference type="FunFam" id="3.50.30.30:FF:000015">
    <property type="entry name" value="Putative e3 ubiquitin-protein ligase rnf43"/>
    <property type="match status" value="1"/>
</dbReference>
<dbReference type="Gene3D" id="3.50.30.30">
    <property type="match status" value="1"/>
</dbReference>
<dbReference type="Gene3D" id="3.30.40.10">
    <property type="entry name" value="Zinc/RING finger domain, C3HC4 (zinc finger)"/>
    <property type="match status" value="1"/>
</dbReference>
<dbReference type="InterPro" id="IPR045907">
    <property type="entry name" value="RNF43_Znf_RING"/>
</dbReference>
<dbReference type="InterPro" id="IPR001841">
    <property type="entry name" value="Znf_RING"/>
</dbReference>
<dbReference type="InterPro" id="IPR013083">
    <property type="entry name" value="Znf_RING/FYVE/PHD"/>
</dbReference>
<dbReference type="InterPro" id="IPR040700">
    <property type="entry name" value="ZNRF-3_ecto"/>
</dbReference>
<dbReference type="InterPro" id="IPR051073">
    <property type="entry name" value="ZNRF3_Arkadia_E3_ligases"/>
</dbReference>
<dbReference type="PANTHER" id="PTHR16200">
    <property type="entry name" value="RING ZINC FINGER"/>
    <property type="match status" value="1"/>
</dbReference>
<dbReference type="Pfam" id="PF13639">
    <property type="entry name" value="zf-RING_2"/>
    <property type="match status" value="1"/>
</dbReference>
<dbReference type="Pfam" id="PF18212">
    <property type="entry name" value="ZNRF_3_ecto"/>
    <property type="match status" value="1"/>
</dbReference>
<dbReference type="SMART" id="SM00184">
    <property type="entry name" value="RING"/>
    <property type="match status" value="1"/>
</dbReference>
<dbReference type="SUPFAM" id="SSF57850">
    <property type="entry name" value="RING/U-box"/>
    <property type="match status" value="1"/>
</dbReference>
<dbReference type="PROSITE" id="PS50089">
    <property type="entry name" value="ZF_RING_2"/>
    <property type="match status" value="1"/>
</dbReference>
<name>RNF43_MOUSE</name>
<proteinExistence type="evidence at protein level"/>
<comment type="function">
    <text evidence="2 7">E3 ubiquitin-protein ligase that acts as a negative regulator of the Wnt signaling pathway by mediating the ubiquitination, endocytosis and subsequent degradation of Wnt receptor complex components Frizzled. Acts on both canonical and non-canonical Wnt signaling pathway (PubMed:22895187). Along with RSPO2 and ZNRF3, constitutes a master switch that governs limb specification (By similarity).</text>
</comment>
<comment type="catalytic activity">
    <reaction>
        <text>S-ubiquitinyl-[E2 ubiquitin-conjugating enzyme]-L-cysteine + [acceptor protein]-L-lysine = [E2 ubiquitin-conjugating enzyme]-L-cysteine + N(6)-ubiquitinyl-[acceptor protein]-L-lysine.</text>
        <dbReference type="EC" id="2.3.2.27"/>
    </reaction>
</comment>
<comment type="pathway">
    <text>Protein modification; protein ubiquitination.</text>
</comment>
<comment type="subunit">
    <text evidence="3 9">Interacts with AKAP8L, NONO and SFPQ. Interacts with FZD5 (By similarity). Identified in a complex composed of RNF43, LGR5 and RSPO1 (By similarity). Interacts with RSPO2 (By similarity). Interacts with LMBR1L (PubMed:31073040).</text>
</comment>
<comment type="subcellular location">
    <subcellularLocation>
        <location evidence="1">Cell membrane</location>
        <topology evidence="1">Single-pass type I membrane protein</topology>
    </subcellularLocation>
    <subcellularLocation>
        <location evidence="11">Endoplasmic reticulum membrane</location>
        <topology evidence="11">Single-pass type I membrane protein</topology>
    </subcellularLocation>
    <subcellularLocation>
        <location evidence="1">Nucleus envelope</location>
    </subcellularLocation>
    <text evidence="1">May be secreted.</text>
</comment>
<comment type="alternative products">
    <event type="alternative splicing"/>
    <isoform>
        <id>Q5NCP0-1</id>
        <name>1</name>
        <sequence type="displayed"/>
    </isoform>
    <isoform>
        <id>Q5NCP0-2</id>
        <name>2</name>
        <sequence type="described" ref="VSP_023203"/>
    </isoform>
    <isoform>
        <id>Q5NCP0-3</id>
        <name>3</name>
        <sequence type="described" ref="VSP_023204 VSP_023205"/>
    </isoform>
</comment>
<comment type="tissue specificity">
    <text evidence="7">Expressed in crypt base columnar cells of small intestinal epithelium. Crypt base columnar cells are small cycling cells residing between the terminally differentiated Paneth cells at crypt bottoms. Colocalizes with Lgr5-positive stem cells.</text>
</comment>
<comment type="developmental stage">
    <text evidence="8">At 14.5 dpc, in the developing limb, expressed only in the ectoderm and, in developing lungs, detected in the epithelium.</text>
</comment>
<comment type="PTM">
    <text evidence="1">Autoubiquitinated.</text>
</comment>
<comment type="disruption phenotype">
    <text evidence="7">Conditional knockout mice lacking both Rnf43 and Znrf3 in intestine show a marked expansion of the proliferative compartment, resembling the effects of acute deletion of Apc.</text>
</comment>
<comment type="similarity">
    <text evidence="11">Belongs to the ZNRF3 family.</text>
</comment>
<sequence>MSGGHQLQLAVLWPWLLMATLHAGFGHTGRVLAAAVESERSAEQKAVIRVIPLKMDPTGKLNLTLEGVFAGVAEVTPAEGKLMQSHPLYLCNASDDDNLEPGFISIVKLESPRRAPRPCLSLASKARMAGERGANAVLFDITEDRSAAEQLQQPLGLTKPVVLIWGSDAAKLMEFVYKNRKAYVWIELKEPPAGANYDVWILLTVVGTVFVIILASVLRIRCRPHHSRPDPLQQRTARAISQLATRRYQAGCRRARAEWPDSGSSCSSTPVCAICLEEFSEGQELRVISCLHEFHRTCVDPWLYQHRTCPLCMFNIVEGDSFSQAPAASPSYQEPGRRLHLIRQHPGHAHYHLPSAYLLGPSRTSVARTPRPRPFLPSQEPSMGSRHQRLPRTSHLRAPEEQQHLAVSPHPYAQGWGLNRLRCTSQHPAACPVALRRARPHESSGSGESYCTERSGYLADGPASDSSSGPCHGSSSDSVVNCTDVSLQGIHGSSSTFRSSLSSDFDPLVYCSPEGDLQGKGIQPSVTSRPRSLDSVVPRGETQVSSHIHYHRHRHHHYKRQFQWHGRKPGPETGIPQSMPAASHTQLEPSLPDQQLITPNPTASSMLPNPQRPRALTEPAPGLAEASSPSPSPKPNPSGLLNLQKSSLTVRHPHRKRRGGPSEPLPTSLPPDLTVHTACPVFPHYSPRLAYPWPPEVHPLMFRPPGPDRRLLHEVPGPCYSSSQPVWLYLNPCQPLGPCLPGEGHSKWTFDSPEGRRCPYSHCQVLPAQPGSEEELEELCEQAV</sequence>
<protein>
    <recommendedName>
        <fullName>E3 ubiquitin-protein ligase RNF43</fullName>
        <ecNumber>2.3.2.27</ecNumber>
    </recommendedName>
    <alternativeName>
        <fullName>RING finger protein 43</fullName>
    </alternativeName>
    <alternativeName>
        <fullName evidence="11">RING-type E3 ubiquitin transferase RNF43</fullName>
    </alternativeName>
</protein>
<reference key="1">
    <citation type="journal article" date="2005" name="Science">
        <title>The transcriptional landscape of the mammalian genome.</title>
        <authorList>
            <person name="Carninci P."/>
            <person name="Kasukawa T."/>
            <person name="Katayama S."/>
            <person name="Gough J."/>
            <person name="Frith M.C."/>
            <person name="Maeda N."/>
            <person name="Oyama R."/>
            <person name="Ravasi T."/>
            <person name="Lenhard B."/>
            <person name="Wells C."/>
            <person name="Kodzius R."/>
            <person name="Shimokawa K."/>
            <person name="Bajic V.B."/>
            <person name="Brenner S.E."/>
            <person name="Batalov S."/>
            <person name="Forrest A.R."/>
            <person name="Zavolan M."/>
            <person name="Davis M.J."/>
            <person name="Wilming L.G."/>
            <person name="Aidinis V."/>
            <person name="Allen J.E."/>
            <person name="Ambesi-Impiombato A."/>
            <person name="Apweiler R."/>
            <person name="Aturaliya R.N."/>
            <person name="Bailey T.L."/>
            <person name="Bansal M."/>
            <person name="Baxter L."/>
            <person name="Beisel K.W."/>
            <person name="Bersano T."/>
            <person name="Bono H."/>
            <person name="Chalk A.M."/>
            <person name="Chiu K.P."/>
            <person name="Choudhary V."/>
            <person name="Christoffels A."/>
            <person name="Clutterbuck D.R."/>
            <person name="Crowe M.L."/>
            <person name="Dalla E."/>
            <person name="Dalrymple B.P."/>
            <person name="de Bono B."/>
            <person name="Della Gatta G."/>
            <person name="di Bernardo D."/>
            <person name="Down T."/>
            <person name="Engstrom P."/>
            <person name="Fagiolini M."/>
            <person name="Faulkner G."/>
            <person name="Fletcher C.F."/>
            <person name="Fukushima T."/>
            <person name="Furuno M."/>
            <person name="Futaki S."/>
            <person name="Gariboldi M."/>
            <person name="Georgii-Hemming P."/>
            <person name="Gingeras T.R."/>
            <person name="Gojobori T."/>
            <person name="Green R.E."/>
            <person name="Gustincich S."/>
            <person name="Harbers M."/>
            <person name="Hayashi Y."/>
            <person name="Hensch T.K."/>
            <person name="Hirokawa N."/>
            <person name="Hill D."/>
            <person name="Huminiecki L."/>
            <person name="Iacono M."/>
            <person name="Ikeo K."/>
            <person name="Iwama A."/>
            <person name="Ishikawa T."/>
            <person name="Jakt M."/>
            <person name="Kanapin A."/>
            <person name="Katoh M."/>
            <person name="Kawasawa Y."/>
            <person name="Kelso J."/>
            <person name="Kitamura H."/>
            <person name="Kitano H."/>
            <person name="Kollias G."/>
            <person name="Krishnan S.P."/>
            <person name="Kruger A."/>
            <person name="Kummerfeld S.K."/>
            <person name="Kurochkin I.V."/>
            <person name="Lareau L.F."/>
            <person name="Lazarevic D."/>
            <person name="Lipovich L."/>
            <person name="Liu J."/>
            <person name="Liuni S."/>
            <person name="McWilliam S."/>
            <person name="Madan Babu M."/>
            <person name="Madera M."/>
            <person name="Marchionni L."/>
            <person name="Matsuda H."/>
            <person name="Matsuzawa S."/>
            <person name="Miki H."/>
            <person name="Mignone F."/>
            <person name="Miyake S."/>
            <person name="Morris K."/>
            <person name="Mottagui-Tabar S."/>
            <person name="Mulder N."/>
            <person name="Nakano N."/>
            <person name="Nakauchi H."/>
            <person name="Ng P."/>
            <person name="Nilsson R."/>
            <person name="Nishiguchi S."/>
            <person name="Nishikawa S."/>
            <person name="Nori F."/>
            <person name="Ohara O."/>
            <person name="Okazaki Y."/>
            <person name="Orlando V."/>
            <person name="Pang K.C."/>
            <person name="Pavan W.J."/>
            <person name="Pavesi G."/>
            <person name="Pesole G."/>
            <person name="Petrovsky N."/>
            <person name="Piazza S."/>
            <person name="Reed J."/>
            <person name="Reid J.F."/>
            <person name="Ring B.Z."/>
            <person name="Ringwald M."/>
            <person name="Rost B."/>
            <person name="Ruan Y."/>
            <person name="Salzberg S.L."/>
            <person name="Sandelin A."/>
            <person name="Schneider C."/>
            <person name="Schoenbach C."/>
            <person name="Sekiguchi K."/>
            <person name="Semple C.A."/>
            <person name="Seno S."/>
            <person name="Sessa L."/>
            <person name="Sheng Y."/>
            <person name="Shibata Y."/>
            <person name="Shimada H."/>
            <person name="Shimada K."/>
            <person name="Silva D."/>
            <person name="Sinclair B."/>
            <person name="Sperling S."/>
            <person name="Stupka E."/>
            <person name="Sugiura K."/>
            <person name="Sultana R."/>
            <person name="Takenaka Y."/>
            <person name="Taki K."/>
            <person name="Tammoja K."/>
            <person name="Tan S.L."/>
            <person name="Tang S."/>
            <person name="Taylor M.S."/>
            <person name="Tegner J."/>
            <person name="Teichmann S.A."/>
            <person name="Ueda H.R."/>
            <person name="van Nimwegen E."/>
            <person name="Verardo R."/>
            <person name="Wei C.L."/>
            <person name="Yagi K."/>
            <person name="Yamanishi H."/>
            <person name="Zabarovsky E."/>
            <person name="Zhu S."/>
            <person name="Zimmer A."/>
            <person name="Hide W."/>
            <person name="Bult C."/>
            <person name="Grimmond S.M."/>
            <person name="Teasdale R.D."/>
            <person name="Liu E.T."/>
            <person name="Brusic V."/>
            <person name="Quackenbush J."/>
            <person name="Wahlestedt C."/>
            <person name="Mattick J.S."/>
            <person name="Hume D.A."/>
            <person name="Kai C."/>
            <person name="Sasaki D."/>
            <person name="Tomaru Y."/>
            <person name="Fukuda S."/>
            <person name="Kanamori-Katayama M."/>
            <person name="Suzuki M."/>
            <person name="Aoki J."/>
            <person name="Arakawa T."/>
            <person name="Iida J."/>
            <person name="Imamura K."/>
            <person name="Itoh M."/>
            <person name="Kato T."/>
            <person name="Kawaji H."/>
            <person name="Kawagashira N."/>
            <person name="Kawashima T."/>
            <person name="Kojima M."/>
            <person name="Kondo S."/>
            <person name="Konno H."/>
            <person name="Nakano K."/>
            <person name="Ninomiya N."/>
            <person name="Nishio T."/>
            <person name="Okada M."/>
            <person name="Plessy C."/>
            <person name="Shibata K."/>
            <person name="Shiraki T."/>
            <person name="Suzuki S."/>
            <person name="Tagami M."/>
            <person name="Waki K."/>
            <person name="Watahiki A."/>
            <person name="Okamura-Oho Y."/>
            <person name="Suzuki H."/>
            <person name="Kawai J."/>
            <person name="Hayashizaki Y."/>
        </authorList>
    </citation>
    <scope>NUCLEOTIDE SEQUENCE [LARGE SCALE MRNA] (ISOFORMS 2 AND 3)</scope>
    <source>
        <strain>C57BL/6J</strain>
        <tissue>Skin</tissue>
        <tissue>Wolffian duct</tissue>
    </source>
</reference>
<reference key="2">
    <citation type="journal article" date="2009" name="PLoS Biol.">
        <title>Lineage-specific biology revealed by a finished genome assembly of the mouse.</title>
        <authorList>
            <person name="Church D.M."/>
            <person name="Goodstadt L."/>
            <person name="Hillier L.W."/>
            <person name="Zody M.C."/>
            <person name="Goldstein S."/>
            <person name="She X."/>
            <person name="Bult C.J."/>
            <person name="Agarwala R."/>
            <person name="Cherry J.L."/>
            <person name="DiCuccio M."/>
            <person name="Hlavina W."/>
            <person name="Kapustin Y."/>
            <person name="Meric P."/>
            <person name="Maglott D."/>
            <person name="Birtle Z."/>
            <person name="Marques A.C."/>
            <person name="Graves T."/>
            <person name="Zhou S."/>
            <person name="Teague B."/>
            <person name="Potamousis K."/>
            <person name="Churas C."/>
            <person name="Place M."/>
            <person name="Herschleb J."/>
            <person name="Runnheim R."/>
            <person name="Forrest D."/>
            <person name="Amos-Landgraf J."/>
            <person name="Schwartz D.C."/>
            <person name="Cheng Z."/>
            <person name="Lindblad-Toh K."/>
            <person name="Eichler E.E."/>
            <person name="Ponting C.P."/>
        </authorList>
    </citation>
    <scope>NUCLEOTIDE SEQUENCE [LARGE SCALE GENOMIC DNA]</scope>
    <source>
        <strain>C57BL/6J</strain>
    </source>
</reference>
<reference key="3">
    <citation type="journal article" date="2004" name="Genome Res.">
        <title>The status, quality, and expansion of the NIH full-length cDNA project: the Mammalian Gene Collection (MGC).</title>
        <authorList>
            <consortium name="The MGC Project Team"/>
        </authorList>
    </citation>
    <scope>NUCLEOTIDE SEQUENCE [LARGE SCALE MRNA] OF 84-784 (ISOFORM 1)</scope>
    <source>
        <strain>Czech II</strain>
        <strain>FVB/N</strain>
        <tissue>Mammary tumor</tissue>
    </source>
</reference>
<reference key="4">
    <citation type="journal article" date="2012" name="Nature">
        <title>Tumour suppressor RNF43 is a stem-cell E3 ligase that induces endocytosis of Wnt receptors.</title>
        <authorList>
            <person name="Koo B.K."/>
            <person name="Spit M."/>
            <person name="Jordens I."/>
            <person name="Low T.Y."/>
            <person name="Stange D.E."/>
            <person name="van de Wetering M."/>
            <person name="van Es J.H."/>
            <person name="Mohammed S."/>
            <person name="Heck A.J."/>
            <person name="Maurice M.M."/>
            <person name="Clevers H."/>
        </authorList>
    </citation>
    <scope>FUNCTION</scope>
    <scope>TISSUE SPECIFICITY</scope>
    <scope>DISRUPTION PHENOTYPE</scope>
</reference>
<reference key="5">
    <citation type="journal article" date="2018" name="Nature">
        <title>RSPO2 inhibition of RNF43 and ZNRF3 governs limb development independently of LGR4/5/6.</title>
        <authorList>
            <person name="Szenker-Ravi E."/>
            <person name="Altunoglu U."/>
            <person name="Leushacke M."/>
            <person name="Bosso-Lefevre C."/>
            <person name="Khatoo M."/>
            <person name="Thi Tran H."/>
            <person name="Naert T."/>
            <person name="Noelanders R."/>
            <person name="Hajamohideen A."/>
            <person name="Beneteau C."/>
            <person name="de Sousa S.B."/>
            <person name="Karaman B."/>
            <person name="Latypova X."/>
            <person name="Basaran S."/>
            <person name="Yuecel E.B."/>
            <person name="Tan T.T."/>
            <person name="Vlaminck L."/>
            <person name="Nayak S.S."/>
            <person name="Shukla A."/>
            <person name="Girisha K.M."/>
            <person name="Le Caignec C."/>
            <person name="Soshnikova N."/>
            <person name="Uyguner Z.O."/>
            <person name="Vleminckx K."/>
            <person name="Barker N."/>
            <person name="Kayserili H."/>
            <person name="Reversade B."/>
        </authorList>
    </citation>
    <scope>DEVELOPMENTAL STAGE</scope>
</reference>
<reference key="6">
    <citation type="journal article" date="2019" name="Science">
        <title>LMBR1L regulates lymphopoiesis through Wnt/beta-catenin signaling.</title>
        <authorList>
            <person name="Choi J.H."/>
            <person name="Zhong X."/>
            <person name="McAlpine W."/>
            <person name="Liao T.C."/>
            <person name="Zhang D."/>
            <person name="Fang B."/>
            <person name="Russell J."/>
            <person name="Ludwig S."/>
            <person name="Nair-Gill E."/>
            <person name="Zhang Z."/>
            <person name="Wang K.W."/>
            <person name="Misawa T."/>
            <person name="Zhan X."/>
            <person name="Choi M."/>
            <person name="Wang T."/>
            <person name="Li X."/>
            <person name="Tang M."/>
            <person name="Sun Q."/>
            <person name="Yu L."/>
            <person name="Murray A.R."/>
            <person name="Moresco E.M.Y."/>
            <person name="Beutler B."/>
        </authorList>
    </citation>
    <scope>INTERACTION WITH LMBR1L</scope>
</reference>